<dbReference type="EMBL" id="AK097840">
    <property type="protein sequence ID" value="BAC05181.1"/>
    <property type="molecule type" value="mRNA"/>
</dbReference>
<dbReference type="GlyGen" id="Q8N7P7">
    <property type="glycosylation" value="5 sites"/>
</dbReference>
<dbReference type="BioMuta" id="-"/>
<dbReference type="PeptideAtlas" id="Q8N7P7"/>
<dbReference type="neXtProt" id="NX_Q8N7P7"/>
<dbReference type="InParanoid" id="Q8N7P7"/>
<dbReference type="PAN-GO" id="Q8N7P7">
    <property type="GO annotations" value="0 GO annotations based on evolutionary models"/>
</dbReference>
<dbReference type="PhylomeDB" id="Q8N7P7"/>
<dbReference type="Pharos" id="Q8N7P7">
    <property type="development level" value="Tdark"/>
</dbReference>
<dbReference type="Proteomes" id="UP000005640">
    <property type="component" value="Unplaced"/>
</dbReference>
<dbReference type="RNAct" id="Q8N7P7">
    <property type="molecule type" value="protein"/>
</dbReference>
<proteinExistence type="evidence at protein level"/>
<name>YH007_HUMAN</name>
<evidence type="ECO:0000256" key="1">
    <source>
        <dbReference type="SAM" id="MobiDB-lite"/>
    </source>
</evidence>
<accession>Q8N7P7</accession>
<reference key="1">
    <citation type="journal article" date="2004" name="Nat. Genet.">
        <title>Complete sequencing and characterization of 21,243 full-length human cDNAs.</title>
        <authorList>
            <person name="Ota T."/>
            <person name="Suzuki Y."/>
            <person name="Nishikawa T."/>
            <person name="Otsuki T."/>
            <person name="Sugiyama T."/>
            <person name="Irie R."/>
            <person name="Wakamatsu A."/>
            <person name="Hayashi K."/>
            <person name="Sato H."/>
            <person name="Nagai K."/>
            <person name="Kimura K."/>
            <person name="Makita H."/>
            <person name="Sekine M."/>
            <person name="Obayashi M."/>
            <person name="Nishi T."/>
            <person name="Shibahara T."/>
            <person name="Tanaka T."/>
            <person name="Ishii S."/>
            <person name="Yamamoto J."/>
            <person name="Saito K."/>
            <person name="Kawai Y."/>
            <person name="Isono Y."/>
            <person name="Nakamura Y."/>
            <person name="Nagahari K."/>
            <person name="Murakami K."/>
            <person name="Yasuda T."/>
            <person name="Iwayanagi T."/>
            <person name="Wagatsuma M."/>
            <person name="Shiratori A."/>
            <person name="Sudo H."/>
            <person name="Hosoiri T."/>
            <person name="Kaku Y."/>
            <person name="Kodaira H."/>
            <person name="Kondo H."/>
            <person name="Sugawara M."/>
            <person name="Takahashi M."/>
            <person name="Kanda K."/>
            <person name="Yokoi T."/>
            <person name="Furuya T."/>
            <person name="Kikkawa E."/>
            <person name="Omura Y."/>
            <person name="Abe K."/>
            <person name="Kamihara K."/>
            <person name="Katsuta N."/>
            <person name="Sato K."/>
            <person name="Tanikawa M."/>
            <person name="Yamazaki M."/>
            <person name="Ninomiya K."/>
            <person name="Ishibashi T."/>
            <person name="Yamashita H."/>
            <person name="Murakawa K."/>
            <person name="Fujimori K."/>
            <person name="Tanai H."/>
            <person name="Kimata M."/>
            <person name="Watanabe M."/>
            <person name="Hiraoka S."/>
            <person name="Chiba Y."/>
            <person name="Ishida S."/>
            <person name="Ono Y."/>
            <person name="Takiguchi S."/>
            <person name="Watanabe S."/>
            <person name="Yosida M."/>
            <person name="Hotuta T."/>
            <person name="Kusano J."/>
            <person name="Kanehori K."/>
            <person name="Takahashi-Fujii A."/>
            <person name="Hara H."/>
            <person name="Tanase T.-O."/>
            <person name="Nomura Y."/>
            <person name="Togiya S."/>
            <person name="Komai F."/>
            <person name="Hara R."/>
            <person name="Takeuchi K."/>
            <person name="Arita M."/>
            <person name="Imose N."/>
            <person name="Musashino K."/>
            <person name="Yuuki H."/>
            <person name="Oshima A."/>
            <person name="Sasaki N."/>
            <person name="Aotsuka S."/>
            <person name="Yoshikawa Y."/>
            <person name="Matsunawa H."/>
            <person name="Ichihara T."/>
            <person name="Shiohata N."/>
            <person name="Sano S."/>
            <person name="Moriya S."/>
            <person name="Momiyama H."/>
            <person name="Satoh N."/>
            <person name="Takami S."/>
            <person name="Terashima Y."/>
            <person name="Suzuki O."/>
            <person name="Nakagawa S."/>
            <person name="Senoh A."/>
            <person name="Mizoguchi H."/>
            <person name="Goto Y."/>
            <person name="Shimizu F."/>
            <person name="Wakebe H."/>
            <person name="Hishigaki H."/>
            <person name="Watanabe T."/>
            <person name="Sugiyama A."/>
            <person name="Takemoto M."/>
            <person name="Kawakami B."/>
            <person name="Yamazaki M."/>
            <person name="Watanabe K."/>
            <person name="Kumagai A."/>
            <person name="Itakura S."/>
            <person name="Fukuzumi Y."/>
            <person name="Fujimori Y."/>
            <person name="Komiyama M."/>
            <person name="Tashiro H."/>
            <person name="Tanigami A."/>
            <person name="Fujiwara T."/>
            <person name="Ono T."/>
            <person name="Yamada K."/>
            <person name="Fujii Y."/>
            <person name="Ozaki K."/>
            <person name="Hirao M."/>
            <person name="Ohmori Y."/>
            <person name="Kawabata A."/>
            <person name="Hikiji T."/>
            <person name="Kobatake N."/>
            <person name="Inagaki H."/>
            <person name="Ikema Y."/>
            <person name="Okamoto S."/>
            <person name="Okitani R."/>
            <person name="Kawakami T."/>
            <person name="Noguchi S."/>
            <person name="Itoh T."/>
            <person name="Shigeta K."/>
            <person name="Senba T."/>
            <person name="Matsumura K."/>
            <person name="Nakajima Y."/>
            <person name="Mizuno T."/>
            <person name="Morinaga M."/>
            <person name="Sasaki M."/>
            <person name="Togashi T."/>
            <person name="Oyama M."/>
            <person name="Hata H."/>
            <person name="Watanabe M."/>
            <person name="Komatsu T."/>
            <person name="Mizushima-Sugano J."/>
            <person name="Satoh T."/>
            <person name="Shirai Y."/>
            <person name="Takahashi Y."/>
            <person name="Nakagawa K."/>
            <person name="Okumura K."/>
            <person name="Nagase T."/>
            <person name="Nomura N."/>
            <person name="Kikuchi H."/>
            <person name="Masuho Y."/>
            <person name="Yamashita R."/>
            <person name="Nakai K."/>
            <person name="Yada T."/>
            <person name="Nakamura Y."/>
            <person name="Ohara O."/>
            <person name="Isogai T."/>
            <person name="Sugano S."/>
        </authorList>
    </citation>
    <scope>NUCLEOTIDE SEQUENCE [LARGE SCALE MRNA]</scope>
    <source>
        <tissue>Testis</tissue>
    </source>
</reference>
<sequence length="452" mass="48314">MTAVSSNRNPEDDGCLLEQEPRGRRLSPRTGTPRTTAVSSNRDPKNDGCLLKQEPRGRRLSPRTGAPGTTAVSSNRNPEDDGCLLKQEPRGRRLSPQTGTPRTTAVSSNRNPGDDGCLLKQGPRGRRLSPQTGTPGTTAVSSNRNPEDDGCLLKQEPRGRRLSPQTGTPGTTAVSSNRDHEDDGCLLKQESRGRRLSPQTGTPGTTAVSSNRNPEDDGCLLKQESRGRRLSPQTGTPGTTAVSSNRDPEDDGCLLKQGPRGRRLSPQTGTPRTTAVSSNRNPEDDGCLLKQGPRGRRLSPQTGIPRTTAVSSNRDPGEDGCLLKQESRGRRLSPQTGTTRTTAVSSKRNPEDDGCLLKQEPRGRRLSSLTGAPGTTAVSSNRDPRTTAVSSNRNPGDDGCLLKQGPRGRRLSPQTGTPGTTAVSSNRDPEDDGCLLKQEPQELRKPEADTAL</sequence>
<feature type="chain" id="PRO_0000339307" description="Uncharacterized protein FLJ40521">
    <location>
        <begin position="1"/>
        <end position="452"/>
    </location>
</feature>
<feature type="region of interest" description="Disordered" evidence="1">
    <location>
        <begin position="1"/>
        <end position="452"/>
    </location>
</feature>
<feature type="compositionally biased region" description="Polar residues" evidence="1">
    <location>
        <begin position="29"/>
        <end position="41"/>
    </location>
</feature>
<feature type="compositionally biased region" description="Polar residues" evidence="1">
    <location>
        <begin position="95"/>
        <end position="111"/>
    </location>
</feature>
<feature type="compositionally biased region" description="Polar residues" evidence="1">
    <location>
        <begin position="129"/>
        <end position="144"/>
    </location>
</feature>
<feature type="compositionally biased region" description="Polar residues" evidence="1">
    <location>
        <begin position="163"/>
        <end position="176"/>
    </location>
</feature>
<feature type="compositionally biased region" description="Basic and acidic residues" evidence="1">
    <location>
        <begin position="177"/>
        <end position="193"/>
    </location>
</feature>
<feature type="compositionally biased region" description="Polar residues" evidence="1">
    <location>
        <begin position="197"/>
        <end position="212"/>
    </location>
</feature>
<feature type="compositionally biased region" description="Polar residues" evidence="1">
    <location>
        <begin position="231"/>
        <end position="245"/>
    </location>
</feature>
<feature type="compositionally biased region" description="Polar residues" evidence="1">
    <location>
        <begin position="265"/>
        <end position="280"/>
    </location>
</feature>
<feature type="compositionally biased region" description="Polar residues" evidence="1">
    <location>
        <begin position="299"/>
        <end position="314"/>
    </location>
</feature>
<feature type="compositionally biased region" description="Polar residues" evidence="1">
    <location>
        <begin position="333"/>
        <end position="347"/>
    </location>
</feature>
<feature type="compositionally biased region" description="Polar residues" evidence="1">
    <location>
        <begin position="376"/>
        <end position="394"/>
    </location>
</feature>
<feature type="compositionally biased region" description="Polar residues" evidence="1">
    <location>
        <begin position="412"/>
        <end position="426"/>
    </location>
</feature>
<feature type="compositionally biased region" description="Basic and acidic residues" evidence="1">
    <location>
        <begin position="439"/>
        <end position="452"/>
    </location>
</feature>
<keyword id="KW-1267">Proteomics identification</keyword>
<keyword id="KW-1185">Reference proteome</keyword>
<organism>
    <name type="scientific">Homo sapiens</name>
    <name type="common">Human</name>
    <dbReference type="NCBI Taxonomy" id="9606"/>
    <lineage>
        <taxon>Eukaryota</taxon>
        <taxon>Metazoa</taxon>
        <taxon>Chordata</taxon>
        <taxon>Craniata</taxon>
        <taxon>Vertebrata</taxon>
        <taxon>Euteleostomi</taxon>
        <taxon>Mammalia</taxon>
        <taxon>Eutheria</taxon>
        <taxon>Euarchontoglires</taxon>
        <taxon>Primates</taxon>
        <taxon>Haplorrhini</taxon>
        <taxon>Catarrhini</taxon>
        <taxon>Hominidae</taxon>
        <taxon>Homo</taxon>
    </lineage>
</organism>
<protein>
    <recommendedName>
        <fullName>Uncharacterized protein FLJ40521</fullName>
    </recommendedName>
</protein>